<sequence>MNCKAVTISLLLLLFLTRVYIQPTFSLISDCDETFNYWEPLNLLVRGFGKQTWEYSPEYSIRSWAFLLPFYCILYPVNKFTDLESHWNFFITRACLGFFSFIMEFKLHREIAGSLALQIANIWIIFQLFNPGWFHASVELLPSAVAMLLYVGATRHSLRYLSTGSTSNFTKSLAYNFLASILGWPFVLILSLPLCLHYLFNHRIISTIRTAFDCCLIFSLTAFAVIVTDSIFYGKLAPVSWNILFYNVINASEESGPNIFGVEPWYYYPLNLLLNFPLPVLVLAILGIFHLRLWPLWASLFTWIAVFTQQPHKEERFLYPIYGLITLSASIAFYKVLNLFNRKPILKKGIKLSVLLIVAGQAMSRIVALVNNYTAPIAVYEQFSSLNQGGVKAPVVNVCTGREWYHFPSSFLLPDNHRLKFVKSGFDGLLPGDFPESGSIFKKIRTLPKGMNNKNIYDTGKEWPITRCDYFIDIVAPINLTKDVFNPLHLMDNWNKLACAAFIDGENSKILGRAFYVPEPINRIMQIVLPKQWNQVYGVRYIDYCLFEKPTETTN</sequence>
<evidence type="ECO:0000255" key="1"/>
<evidence type="ECO:0000269" key="2">
    <source>
    </source>
</evidence>
<evidence type="ECO:0000269" key="3">
    <source>
    </source>
</evidence>
<evidence type="ECO:0000305" key="4"/>
<evidence type="ECO:0000305" key="5">
    <source>
    </source>
</evidence>
<organism>
    <name type="scientific">Saccharomyces cerevisiae (strain ATCC 204508 / S288c)</name>
    <name type="common">Baker's yeast</name>
    <dbReference type="NCBI Taxonomy" id="559292"/>
    <lineage>
        <taxon>Eukaryota</taxon>
        <taxon>Fungi</taxon>
        <taxon>Dikarya</taxon>
        <taxon>Ascomycota</taxon>
        <taxon>Saccharomycotina</taxon>
        <taxon>Saccharomycetes</taxon>
        <taxon>Saccharomycetales</taxon>
        <taxon>Saccharomycetaceae</taxon>
        <taxon>Saccharomyces</taxon>
    </lineage>
</organism>
<dbReference type="EC" id="2.4.1.259" evidence="2"/>
<dbReference type="EC" id="2.4.1.261" evidence="2"/>
<dbReference type="EMBL" id="X96417">
    <property type="protein sequence ID" value="CAA65277.1"/>
    <property type="molecule type" value="Genomic_DNA"/>
</dbReference>
<dbReference type="EMBL" id="Z71495">
    <property type="protein sequence ID" value="CAA96122.1"/>
    <property type="molecule type" value="Genomic_DNA"/>
</dbReference>
<dbReference type="EMBL" id="BK006947">
    <property type="protein sequence ID" value="DAA10337.1"/>
    <property type="molecule type" value="Genomic_DNA"/>
</dbReference>
<dbReference type="PIR" id="S63177">
    <property type="entry name" value="S63177"/>
</dbReference>
<dbReference type="RefSeq" id="NP_014180.1">
    <property type="nucleotide sequence ID" value="NM_001183057.1"/>
</dbReference>
<dbReference type="BioGRID" id="35617">
    <property type="interactions" value="318"/>
</dbReference>
<dbReference type="DIP" id="DIP-4288N"/>
<dbReference type="FunCoup" id="P53868">
    <property type="interactions" value="1088"/>
</dbReference>
<dbReference type="IntAct" id="P53868">
    <property type="interactions" value="44"/>
</dbReference>
<dbReference type="STRING" id="4932.YNL219C"/>
<dbReference type="CAZy" id="GT22">
    <property type="family name" value="Glycosyltransferase Family 22"/>
</dbReference>
<dbReference type="iPTMnet" id="P53868"/>
<dbReference type="PaxDb" id="4932-YNL219C"/>
<dbReference type="PeptideAtlas" id="P53868"/>
<dbReference type="EnsemblFungi" id="YNL219C_mRNA">
    <property type="protein sequence ID" value="YNL219C"/>
    <property type="gene ID" value="YNL219C"/>
</dbReference>
<dbReference type="GeneID" id="855502"/>
<dbReference type="KEGG" id="sce:YNL219C"/>
<dbReference type="AGR" id="SGD:S000005163"/>
<dbReference type="SGD" id="S000005163">
    <property type="gene designation" value="ALG9"/>
</dbReference>
<dbReference type="VEuPathDB" id="FungiDB:YNL219C"/>
<dbReference type="eggNOG" id="KOG2515">
    <property type="taxonomic scope" value="Eukaryota"/>
</dbReference>
<dbReference type="GeneTree" id="ENSGT00950000183090"/>
<dbReference type="HOGENOM" id="CLU_018152_1_1_1"/>
<dbReference type="InParanoid" id="P53868"/>
<dbReference type="OMA" id="PRDMHAK"/>
<dbReference type="OrthoDB" id="497541at2759"/>
<dbReference type="BioCyc" id="MetaCyc:YNL219C-MONOMER"/>
<dbReference type="BioCyc" id="YEAST:YNL219C-MONOMER"/>
<dbReference type="BRENDA" id="2.4.1.259">
    <property type="organism ID" value="984"/>
</dbReference>
<dbReference type="Reactome" id="R-SCE-446193">
    <property type="pathway name" value="Biosynthesis of the N-glycan precursor (dolichol lipid-linked oligosaccharide, LLO) and transfer to a nascent protein"/>
</dbReference>
<dbReference type="UniPathway" id="UPA00378"/>
<dbReference type="BioGRID-ORCS" id="855502">
    <property type="hits" value="0 hits in 10 CRISPR screens"/>
</dbReference>
<dbReference type="PRO" id="PR:P53868"/>
<dbReference type="Proteomes" id="UP000002311">
    <property type="component" value="Chromosome XIV"/>
</dbReference>
<dbReference type="RNAct" id="P53868">
    <property type="molecule type" value="protein"/>
</dbReference>
<dbReference type="GO" id="GO:0005783">
    <property type="term" value="C:endoplasmic reticulum"/>
    <property type="evidence" value="ECO:0000315"/>
    <property type="project" value="SGD"/>
</dbReference>
<dbReference type="GO" id="GO:0005789">
    <property type="term" value="C:endoplasmic reticulum membrane"/>
    <property type="evidence" value="ECO:0000318"/>
    <property type="project" value="GO_Central"/>
</dbReference>
<dbReference type="GO" id="GO:0000026">
    <property type="term" value="F:alpha-1,2-mannosyltransferase activity"/>
    <property type="evidence" value="ECO:0000318"/>
    <property type="project" value="GO_Central"/>
</dbReference>
<dbReference type="GO" id="GO:0052926">
    <property type="term" value="F:dol-P-Man:Man(6)GlcNAc(2)-PP-Dol alpha-1,2-mannosyltransferase activity"/>
    <property type="evidence" value="ECO:0000314"/>
    <property type="project" value="SGD"/>
</dbReference>
<dbReference type="GO" id="GO:0052918">
    <property type="term" value="F:dol-P-Man:Man(8)GlcNAc(2)-PP-Dol alpha-1,2-mannosyltransferase activity"/>
    <property type="evidence" value="ECO:0000314"/>
    <property type="project" value="SGD"/>
</dbReference>
<dbReference type="GO" id="GO:0000030">
    <property type="term" value="F:mannosyltransferase activity"/>
    <property type="evidence" value="ECO:0000315"/>
    <property type="project" value="SGD"/>
</dbReference>
<dbReference type="GO" id="GO:0006488">
    <property type="term" value="P:dolichol-linked oligosaccharide biosynthetic process"/>
    <property type="evidence" value="ECO:0000315"/>
    <property type="project" value="SGD"/>
</dbReference>
<dbReference type="GO" id="GO:0006486">
    <property type="term" value="P:protein glycosylation"/>
    <property type="evidence" value="ECO:0000315"/>
    <property type="project" value="SGD"/>
</dbReference>
<dbReference type="GO" id="GO:0006487">
    <property type="term" value="P:protein N-linked glycosylation"/>
    <property type="evidence" value="ECO:0000314"/>
    <property type="project" value="SGD"/>
</dbReference>
<dbReference type="InterPro" id="IPR005599">
    <property type="entry name" value="GPI_mannosylTrfase"/>
</dbReference>
<dbReference type="PANTHER" id="PTHR22760:SF2">
    <property type="entry name" value="ALPHA-1,2-MANNOSYLTRANSFERASE ALG9"/>
    <property type="match status" value="1"/>
</dbReference>
<dbReference type="PANTHER" id="PTHR22760">
    <property type="entry name" value="GLYCOSYLTRANSFERASE"/>
    <property type="match status" value="1"/>
</dbReference>
<dbReference type="Pfam" id="PF03901">
    <property type="entry name" value="Glyco_transf_22"/>
    <property type="match status" value="1"/>
</dbReference>
<accession>P53868</accession>
<accession>D6W0X1</accession>
<reference key="1">
    <citation type="journal article" date="1996" name="Proc. Natl. Acad. Sci. U.S.A.">
        <title>Stepwise assembly of the lipid-linked oligosaccharide in the endoplasmic reticulum of Saccharomyces cerevisiae: identification of the ALG9 gene encoding a putative mannosyl transferase.</title>
        <authorList>
            <person name="Burda P."/>
            <person name="Te Heesen S."/>
            <person name="Brachat A."/>
            <person name="Wach A."/>
            <person name="Duesterhoeft A."/>
            <person name="Aebi M."/>
        </authorList>
    </citation>
    <scope>NUCLEOTIDE SEQUENCE [GENOMIC DNA]</scope>
    <source>
        <strain>SS328</strain>
    </source>
</reference>
<reference key="2">
    <citation type="journal article" date="1997" name="Nature">
        <title>The nucleotide sequence of Saccharomyces cerevisiae chromosome XIV and its evolutionary implications.</title>
        <authorList>
            <person name="Philippsen P."/>
            <person name="Kleine K."/>
            <person name="Poehlmann R."/>
            <person name="Duesterhoeft A."/>
            <person name="Hamberg K."/>
            <person name="Hegemann J.H."/>
            <person name="Obermaier B."/>
            <person name="Urrestarazu L.A."/>
            <person name="Aert R."/>
            <person name="Albermann K."/>
            <person name="Altmann R."/>
            <person name="Andre B."/>
            <person name="Baladron V."/>
            <person name="Ballesta J.P.G."/>
            <person name="Becam A.-M."/>
            <person name="Beinhauer J.D."/>
            <person name="Boskovic J."/>
            <person name="Buitrago M.J."/>
            <person name="Bussereau F."/>
            <person name="Coster F."/>
            <person name="Crouzet M."/>
            <person name="D'Angelo M."/>
            <person name="Dal Pero F."/>
            <person name="De Antoni A."/>
            <person name="del Rey F."/>
            <person name="Doignon F."/>
            <person name="Domdey H."/>
            <person name="Dubois E."/>
            <person name="Fiedler T.A."/>
            <person name="Fleig U."/>
            <person name="Floeth M."/>
            <person name="Fritz C."/>
            <person name="Gaillardin C."/>
            <person name="Garcia-Cantalejo J.M."/>
            <person name="Glansdorff N."/>
            <person name="Goffeau A."/>
            <person name="Gueldener U."/>
            <person name="Herbert C.J."/>
            <person name="Heumann K."/>
            <person name="Heuss-Neitzel D."/>
            <person name="Hilbert H."/>
            <person name="Hinni K."/>
            <person name="Iraqui Houssaini I."/>
            <person name="Jacquet M."/>
            <person name="Jimenez A."/>
            <person name="Jonniaux J.-L."/>
            <person name="Karpfinger-Hartl L."/>
            <person name="Lanfranchi G."/>
            <person name="Lepingle A."/>
            <person name="Levesque H."/>
            <person name="Lyck R."/>
            <person name="Maftahi M."/>
            <person name="Mallet L."/>
            <person name="Maurer C.T.C."/>
            <person name="Messenguy F."/>
            <person name="Mewes H.-W."/>
            <person name="Moestl D."/>
            <person name="Nasr F."/>
            <person name="Nicaud J.-M."/>
            <person name="Niedenthal R.K."/>
            <person name="Pandolfo D."/>
            <person name="Pierard A."/>
            <person name="Piravandi E."/>
            <person name="Planta R.J."/>
            <person name="Pohl T.M."/>
            <person name="Purnelle B."/>
            <person name="Rebischung C."/>
            <person name="Remacha M.A."/>
            <person name="Revuelta J.L."/>
            <person name="Rinke M."/>
            <person name="Saiz J.E."/>
            <person name="Sartorello F."/>
            <person name="Scherens B."/>
            <person name="Sen-Gupta M."/>
            <person name="Soler-Mira A."/>
            <person name="Urbanus J.H.M."/>
            <person name="Valle G."/>
            <person name="Van Dyck L."/>
            <person name="Verhasselt P."/>
            <person name="Vierendeels F."/>
            <person name="Vissers S."/>
            <person name="Voet M."/>
            <person name="Volckaert G."/>
            <person name="Wach A."/>
            <person name="Wambutt R."/>
            <person name="Wedler H."/>
            <person name="Zollner A."/>
            <person name="Hani J."/>
        </authorList>
    </citation>
    <scope>NUCLEOTIDE SEQUENCE [LARGE SCALE GENOMIC DNA]</scope>
    <source>
        <strain>ATCC 204508 / S288c</strain>
    </source>
</reference>
<reference key="3">
    <citation type="journal article" date="2005" name="Glycobiology">
        <title>ALG9 mannosyltransferase is involved in two different steps of lipid-linked oligosaccharide biosynthesis.</title>
        <authorList>
            <person name="Frank C.G."/>
            <person name="Aebi M."/>
        </authorList>
    </citation>
    <scope>FUNCTION</scope>
    <scope>CATALYTIC ACTIVITY</scope>
    <scope>SUBSTRATE SPECIFICITY</scope>
    <scope>PATHWAY</scope>
    <scope>SUBCELLULAR LOCATION</scope>
</reference>
<reference key="4">
    <citation type="journal article" date="2014" name="G3 (Bethesda)">
        <title>The reference genome sequence of Saccharomyces cerevisiae: Then and now.</title>
        <authorList>
            <person name="Engel S.R."/>
            <person name="Dietrich F.S."/>
            <person name="Fisk D.G."/>
            <person name="Binkley G."/>
            <person name="Balakrishnan R."/>
            <person name="Costanzo M.C."/>
            <person name="Dwight S.S."/>
            <person name="Hitz B.C."/>
            <person name="Karra K."/>
            <person name="Nash R.S."/>
            <person name="Weng S."/>
            <person name="Wong E.D."/>
            <person name="Lloyd P."/>
            <person name="Skrzypek M.S."/>
            <person name="Miyasato S.R."/>
            <person name="Simison M."/>
            <person name="Cherry J.M."/>
        </authorList>
    </citation>
    <scope>GENOME REANNOTATION</scope>
    <source>
        <strain>ATCC 204508 / S288c</strain>
    </source>
</reference>
<reference key="5">
    <citation type="journal article" date="2006" name="Proc. Natl. Acad. Sci. U.S.A.">
        <title>A global topology map of the Saccharomyces cerevisiae membrane proteome.</title>
        <authorList>
            <person name="Kim H."/>
            <person name="Melen K."/>
            <person name="Oesterberg M."/>
            <person name="von Heijne G."/>
        </authorList>
    </citation>
    <scope>TOPOLOGY [LARGE SCALE ANALYSIS]</scope>
    <source>
        <strain>ATCC 208353 / W303-1A</strain>
    </source>
</reference>
<comment type="function">
    <text evidence="2">Mannosyltransferase that operates in the biosynthetic pathway of dolichol-linked oligosaccharides, the glycan precursors employed in protein asparagine (N)-glycosylation. The assembly of dolichol-linked oligosaccharides begins on the cytosolic side of the endoplasmic reticulum membrane and finishes in its lumen. The sequential addition of sugars to dolichol pyrophosphate produces dolichol-linked oligosaccharides containing fourteen sugars, including two GlcNAcs, nine mannoses and three glucoses. Once assembled, the oligosaccharide is transferred from the lipid to nascent proteins by oligosaccharyltransferases. In the lumen of the endoplasmic reticulum, catalyzes the addition of the seventh and ninth alpha-1,2-linked mannose residues to Man(6)GlcNAc(2)-PP-dolichol and Man(8)GlcNAc(2)-PP-dolichol respectively.</text>
</comment>
<comment type="catalytic activity">
    <reaction evidence="2">
        <text>an alpha-D-Man-(1-&gt;2)-alpha-D-Man-(1-&gt;2)-alpha-D-Man-(1-&gt;3)-[alpha-D-Man-(1-&gt;3)-alpha-D-Man-(1-&gt;6)]-beta-D-Man-(1-&gt;4)-beta-D-GlcNAc-(1-&gt;4)-alpha-D-GlcNAc-diphospho-di-trans,poly-cis-dolichol + a di-trans,poly-cis-dolichyl beta-D-mannosyl phosphate = an alpha-D-Man-(1-&gt;2)-alpha-D-Man-(1-&gt;2)-alpha-D-Man-(1-&gt;3)-[alpha-D-Man-(1-&gt;2)-alpha-D-Man-(1-&gt;3)-alpha-D-Man-(1-&gt;6)]-beta-D-Man-(1-&gt;4)-beta-D-GlcNAc-(1-&gt;4)-alpha-D-GlcNAc-diphospho-di-trans,poly-cis-dolichol + a di-trans,poly-cis-dolichyl phosphate + H(+)</text>
        <dbReference type="Rhea" id="RHEA:29531"/>
        <dbReference type="Rhea" id="RHEA-COMP:19498"/>
        <dbReference type="Rhea" id="RHEA-COMP:19501"/>
        <dbReference type="Rhea" id="RHEA-COMP:19517"/>
        <dbReference type="Rhea" id="RHEA-COMP:19518"/>
        <dbReference type="ChEBI" id="CHEBI:15378"/>
        <dbReference type="ChEBI" id="CHEBI:57683"/>
        <dbReference type="ChEBI" id="CHEBI:58211"/>
        <dbReference type="ChEBI" id="CHEBI:132516"/>
        <dbReference type="ChEBI" id="CHEBI:132517"/>
        <dbReference type="EC" id="2.4.1.259"/>
    </reaction>
    <physiologicalReaction direction="left-to-right" evidence="5">
        <dbReference type="Rhea" id="RHEA:29532"/>
    </physiologicalReaction>
</comment>
<comment type="catalytic activity">
    <reaction evidence="2">
        <text>an alpha-D-Man-(1-&gt;2)-alpha-D-Man-(1-&gt;2)-alpha-D-Man-(1-&gt;3)-[alpha-D-Man-(1-&gt;2)-alpha-D-Man-(1-&gt;3)-[alpha-D-Man-(1-&gt;6)]-alpha-D-Man-(1-&gt;6)]-beta-D-Man-(1-&gt;4)-beta-D-GlcNAc-(1-&gt;4)-alpha-D-GlcNAc-diphospho-di-trans,poly-cis-dolichol + a di-trans,poly-cis-dolichyl beta-D-mannosyl phosphate = an alpha-D-Man-(1-&gt;2)-alpha-D-Man-(1-&gt;2)-alpha-D-Man-(1-&gt;3)-[alpha-D-Man-(1-&gt;2)-alpha-D-Man-(1-&gt;3)-[alpha-D-Man-(1-&gt;2)-alpha-D-Man-(1-&gt;6)]-alpha-D-Man-(1-&gt;6)]-beta-D-Man-(1-&gt;4)-beta-D-GlcNAc-(1-&gt;4)-alpha-D-GlcNAc-diphospho-di-trans,poly-cis-dolichol + a di-trans,poly-cis-dolichyl phosphate + H(+)</text>
        <dbReference type="Rhea" id="RHEA:29539"/>
        <dbReference type="Rhea" id="RHEA-COMP:19498"/>
        <dbReference type="Rhea" id="RHEA-COMP:19501"/>
        <dbReference type="Rhea" id="RHEA-COMP:19519"/>
        <dbReference type="Rhea" id="RHEA-COMP:19520"/>
        <dbReference type="ChEBI" id="CHEBI:15378"/>
        <dbReference type="ChEBI" id="CHEBI:57683"/>
        <dbReference type="ChEBI" id="CHEBI:58211"/>
        <dbReference type="ChEBI" id="CHEBI:132519"/>
        <dbReference type="ChEBI" id="CHEBI:132520"/>
        <dbReference type="EC" id="2.4.1.261"/>
    </reaction>
    <physiologicalReaction direction="left-to-right" evidence="5">
        <dbReference type="Rhea" id="RHEA:29540"/>
    </physiologicalReaction>
</comment>
<comment type="pathway">
    <text evidence="2">Protein modification; protein glycosylation.</text>
</comment>
<comment type="subcellular location">
    <subcellularLocation>
        <location evidence="5">Endoplasmic reticulum membrane</location>
        <topology evidence="3">Multi-pass membrane protein</topology>
    </subcellularLocation>
</comment>
<comment type="similarity">
    <text evidence="4">Belongs to the glycosyltransferase 22 family.</text>
</comment>
<protein>
    <recommendedName>
        <fullName evidence="5">Alpha-1,2-mannosyltransferase ALG9</fullName>
        <ecNumber evidence="2">2.4.1.259</ecNumber>
        <ecNumber evidence="2">2.4.1.261</ecNumber>
    </recommendedName>
    <alternativeName>
        <fullName>Asparagine-linked glycosylation protein 9</fullName>
    </alternativeName>
    <alternativeName>
        <fullName>Dol-P-Man:Man(6)GlcNAc(2)-PP-Dol alpha-1,2-mannosyltransferase</fullName>
    </alternativeName>
    <alternativeName>
        <fullName>Dol-P-Man:Man(8)GlcNAc(2)-PP-Dol alpha-1,2-mannosyltransferase</fullName>
    </alternativeName>
</protein>
<name>ALG9_YEAST</name>
<proteinExistence type="evidence at protein level"/>
<feature type="chain" id="PRO_0000215789" description="Alpha-1,2-mannosyltransferase ALG9">
    <location>
        <begin position="1"/>
        <end position="555"/>
    </location>
</feature>
<feature type="topological domain" description="Cytoplasmic" evidence="1">
    <location>
        <begin position="1"/>
        <end position="7"/>
    </location>
</feature>
<feature type="transmembrane region" description="Helical" evidence="1">
    <location>
        <begin position="8"/>
        <end position="28"/>
    </location>
</feature>
<feature type="topological domain" description="Lumenal" evidence="1">
    <location>
        <begin position="29"/>
        <end position="62"/>
    </location>
</feature>
<feature type="transmembrane region" description="Helical" evidence="1">
    <location>
        <begin position="63"/>
        <end position="83"/>
    </location>
</feature>
<feature type="topological domain" description="Cytoplasmic" evidence="1">
    <location>
        <begin position="84"/>
        <end position="86"/>
    </location>
</feature>
<feature type="transmembrane region" description="Helical" evidence="1">
    <location>
        <begin position="87"/>
        <end position="107"/>
    </location>
</feature>
<feature type="topological domain" description="Lumenal" evidence="1">
    <location>
        <begin position="108"/>
        <end position="113"/>
    </location>
</feature>
<feature type="transmembrane region" description="Helical" evidence="1">
    <location>
        <begin position="114"/>
        <end position="134"/>
    </location>
</feature>
<feature type="topological domain" description="Cytoplasmic" evidence="1">
    <location>
        <begin position="135"/>
        <end position="176"/>
    </location>
</feature>
<feature type="transmembrane region" description="Helical" evidence="1">
    <location>
        <begin position="177"/>
        <end position="197"/>
    </location>
</feature>
<feature type="topological domain" description="Lumenal" evidence="1">
    <location>
        <begin position="198"/>
        <end position="213"/>
    </location>
</feature>
<feature type="transmembrane region" description="Helical" evidence="1">
    <location>
        <begin position="214"/>
        <end position="234"/>
    </location>
</feature>
<feature type="topological domain" description="Cytoplasmic" evidence="1">
    <location>
        <begin position="235"/>
        <end position="268"/>
    </location>
</feature>
<feature type="transmembrane region" description="Helical" evidence="1">
    <location>
        <begin position="269"/>
        <end position="289"/>
    </location>
</feature>
<feature type="topological domain" description="Lumenal" evidence="1">
    <location>
        <begin position="290"/>
        <end position="316"/>
    </location>
</feature>
<feature type="transmembrane region" description="Helical" evidence="1">
    <location>
        <begin position="317"/>
        <end position="337"/>
    </location>
</feature>
<feature type="topological domain" description="Cytoplasmic" evidence="1">
    <location>
        <begin position="338"/>
        <end position="349"/>
    </location>
</feature>
<feature type="transmembrane region" description="Helical" evidence="1">
    <location>
        <begin position="350"/>
        <end position="370"/>
    </location>
</feature>
<feature type="topological domain" description="Lumenal" evidence="1">
    <location>
        <begin position="371"/>
        <end position="555"/>
    </location>
</feature>
<gene>
    <name type="primary">ALG9</name>
    <name type="ordered locus">YNL219C</name>
    <name type="ORF">N1295</name>
</gene>
<keyword id="KW-0256">Endoplasmic reticulum</keyword>
<keyword id="KW-0328">Glycosyltransferase</keyword>
<keyword id="KW-0472">Membrane</keyword>
<keyword id="KW-1185">Reference proteome</keyword>
<keyword id="KW-0808">Transferase</keyword>
<keyword id="KW-0812">Transmembrane</keyword>
<keyword id="KW-1133">Transmembrane helix</keyword>